<feature type="chain" id="PRO_0000054578" description="Very-long-chain 3-oxooacyl-coA reductase let-767">
    <location>
        <begin position="1"/>
        <end position="316"/>
    </location>
</feature>
<feature type="active site" description="Proton acceptor" evidence="2">
    <location>
        <position position="202"/>
    </location>
</feature>
<feature type="binding site" evidence="1">
    <location>
        <begin position="47"/>
        <end position="76"/>
    </location>
    <ligand>
        <name>NADP(+)</name>
        <dbReference type="ChEBI" id="CHEBI:58349"/>
    </ligand>
</feature>
<feature type="binding site" evidence="1">
    <location>
        <position position="106"/>
    </location>
    <ligand>
        <name>NADP(+)</name>
        <dbReference type="ChEBI" id="CHEBI:58349"/>
    </ligand>
</feature>
<feature type="binding site" evidence="1">
    <location>
        <position position="189"/>
    </location>
    <ligand>
        <name>substrate</name>
    </ligand>
</feature>
<feature type="binding site" evidence="1">
    <location>
        <position position="206"/>
    </location>
    <ligand>
        <name>NADP(+)</name>
        <dbReference type="ChEBI" id="CHEBI:58349"/>
    </ligand>
</feature>
<feature type="splice variant" id="VSP_061063" description="In isoform 2 and isoform 3.">
    <original>M</original>
    <variation>MESSDNLHDIDNLENGNM</variation>
    <location>
        <position position="1"/>
    </location>
</feature>
<feature type="splice variant" id="VSP_061064" description="In isoform 3.">
    <original>L</original>
    <variation>LFLTQ</variation>
    <location>
        <position position="167"/>
    </location>
</feature>
<feature type="mutagenesis site" description="Arrests at early larval stage." evidence="3">
    <original>G</original>
    <variation>R</variation>
    <location>
        <position position="135"/>
    </location>
</feature>
<dbReference type="EC" id="1.1.1.330" evidence="12 13"/>
<dbReference type="EC" id="1.1.1.-" evidence="4"/>
<dbReference type="EMBL" id="FO080744">
    <property type="protein sequence ID" value="CCD66337.1"/>
    <property type="molecule type" value="Genomic_DNA"/>
</dbReference>
<dbReference type="EMBL" id="BX284603">
    <property type="protein sequence ID" value="CCD66339.1"/>
    <property type="molecule type" value="Genomic_DNA"/>
</dbReference>
<dbReference type="EMBL" id="BX284603">
    <property type="protein sequence ID" value="CDG24102.1"/>
    <property type="molecule type" value="Genomic_DNA"/>
</dbReference>
<dbReference type="PIR" id="T15867">
    <property type="entry name" value="T15867"/>
</dbReference>
<dbReference type="RefSeq" id="NP_001254935.1">
    <molecule id="Q09517-2"/>
    <property type="nucleotide sequence ID" value="NM_001268006.3"/>
</dbReference>
<dbReference type="RefSeq" id="NP_001254936.1">
    <molecule id="Q09517-1"/>
    <property type="nucleotide sequence ID" value="NM_001268007.4"/>
</dbReference>
<dbReference type="RefSeq" id="NP_001293606.1">
    <molecule id="Q09517-3"/>
    <property type="nucleotide sequence ID" value="NM_001306677.4"/>
</dbReference>
<dbReference type="SMR" id="Q09517"/>
<dbReference type="BioGRID" id="41115">
    <property type="interactions" value="11"/>
</dbReference>
<dbReference type="FunCoup" id="Q09517">
    <property type="interactions" value="2516"/>
</dbReference>
<dbReference type="STRING" id="6239.C56G2.6c.1"/>
<dbReference type="SwissLipids" id="SLP:000000030"/>
<dbReference type="SwissLipids" id="SLP:000000178"/>
<dbReference type="iPTMnet" id="Q09517"/>
<dbReference type="PaxDb" id="6239-C56G2.6c"/>
<dbReference type="PeptideAtlas" id="Q09517"/>
<dbReference type="EnsemblMetazoa" id="C56G2.6a.1">
    <molecule id="Q09517-1"/>
    <property type="protein sequence ID" value="C56G2.6a.1"/>
    <property type="gene ID" value="WBGene00002891"/>
</dbReference>
<dbReference type="EnsemblMetazoa" id="C56G2.6a.2">
    <molecule id="Q09517-1"/>
    <property type="protein sequence ID" value="C56G2.6a.2"/>
    <property type="gene ID" value="WBGene00002891"/>
</dbReference>
<dbReference type="EnsemblMetazoa" id="C56G2.6b.1">
    <molecule id="Q09517-2"/>
    <property type="protein sequence ID" value="C56G2.6b.1"/>
    <property type="gene ID" value="WBGene00002891"/>
</dbReference>
<dbReference type="EnsemblMetazoa" id="C56G2.6c.1">
    <molecule id="Q09517-3"/>
    <property type="protein sequence ID" value="C56G2.6c.1"/>
    <property type="gene ID" value="WBGene00002891"/>
</dbReference>
<dbReference type="GeneID" id="175895"/>
<dbReference type="KEGG" id="cel:CELE_C56G2.6"/>
<dbReference type="UCSC" id="C56G2.6.2">
    <molecule id="Q09517-1"/>
    <property type="organism name" value="c. elegans"/>
</dbReference>
<dbReference type="AGR" id="WB:WBGene00002891"/>
<dbReference type="CTD" id="175895"/>
<dbReference type="WormBase" id="C56G2.6a">
    <molecule id="Q09517-1"/>
    <property type="protein sequence ID" value="CE30639"/>
    <property type="gene ID" value="WBGene00002891"/>
    <property type="gene designation" value="let-767"/>
</dbReference>
<dbReference type="WormBase" id="C56G2.6b">
    <molecule id="Q09517-2"/>
    <property type="protein sequence ID" value="CE01875"/>
    <property type="gene ID" value="WBGene00002891"/>
    <property type="gene designation" value="let-767"/>
</dbReference>
<dbReference type="WormBase" id="C56G2.6c">
    <molecule id="Q09517-3"/>
    <property type="protein sequence ID" value="CE48447"/>
    <property type="gene ID" value="WBGene00002891"/>
    <property type="gene designation" value="let-767"/>
</dbReference>
<dbReference type="eggNOG" id="KOG1014">
    <property type="taxonomic scope" value="Eukaryota"/>
</dbReference>
<dbReference type="GeneTree" id="ENSGT00940000165708"/>
<dbReference type="HOGENOM" id="CLU_010194_38_0_1"/>
<dbReference type="InParanoid" id="Q09517"/>
<dbReference type="OMA" id="LVAPGMM"/>
<dbReference type="OrthoDB" id="5545019at2759"/>
<dbReference type="PhylomeDB" id="Q09517"/>
<dbReference type="UniPathway" id="UPA00094"/>
<dbReference type="PRO" id="PR:Q09517"/>
<dbReference type="Proteomes" id="UP000001940">
    <property type="component" value="Chromosome III"/>
</dbReference>
<dbReference type="Bgee" id="WBGene00002891">
    <property type="expression patterns" value="Expressed in larva and 4 other cell types or tissues"/>
</dbReference>
<dbReference type="ExpressionAtlas" id="Q09517">
    <property type="expression patterns" value="baseline and differential"/>
</dbReference>
<dbReference type="GO" id="GO:0045179">
    <property type="term" value="C:apical cortex"/>
    <property type="evidence" value="ECO:0000314"/>
    <property type="project" value="WormBase"/>
</dbReference>
<dbReference type="GO" id="GO:0005783">
    <property type="term" value="C:endoplasmic reticulum"/>
    <property type="evidence" value="ECO:0000314"/>
    <property type="project" value="WormBase"/>
</dbReference>
<dbReference type="GO" id="GO:0072582">
    <property type="term" value="F:17-beta-hydroxysteroid dehydrogenase (NADP+) activity"/>
    <property type="evidence" value="ECO:0007669"/>
    <property type="project" value="RHEA"/>
</dbReference>
<dbReference type="GO" id="GO:0050062">
    <property type="term" value="F:long-chain-fatty-acyl-CoA reductase activity"/>
    <property type="evidence" value="ECO:0000314"/>
    <property type="project" value="WormBase"/>
</dbReference>
<dbReference type="GO" id="GO:0030283">
    <property type="term" value="F:testosterone dehydrogenase [NAD(P)+] activity"/>
    <property type="evidence" value="ECO:0000314"/>
    <property type="project" value="WormBase"/>
</dbReference>
<dbReference type="GO" id="GO:0141040">
    <property type="term" value="F:very-long-chain 3-oxoacyl-CoA reductase activity"/>
    <property type="evidence" value="ECO:0007669"/>
    <property type="project" value="UniProtKB-EC"/>
</dbReference>
<dbReference type="GO" id="GO:0008209">
    <property type="term" value="P:androgen metabolic process"/>
    <property type="evidence" value="ECO:0000315"/>
    <property type="project" value="WormBase"/>
</dbReference>
<dbReference type="GO" id="GO:0032502">
    <property type="term" value="P:developmental process"/>
    <property type="evidence" value="ECO:0000315"/>
    <property type="project" value="UniProtKB"/>
</dbReference>
<dbReference type="GO" id="GO:0045197">
    <property type="term" value="P:establishment or maintenance of epithelial cell apical/basal polarity"/>
    <property type="evidence" value="ECO:0000315"/>
    <property type="project" value="UniProtKB"/>
</dbReference>
<dbReference type="GO" id="GO:0008210">
    <property type="term" value="P:estrogen metabolic process"/>
    <property type="evidence" value="ECO:0000315"/>
    <property type="project" value="WormBase"/>
</dbReference>
<dbReference type="GO" id="GO:0030497">
    <property type="term" value="P:fatty acid elongation"/>
    <property type="evidence" value="ECO:0000318"/>
    <property type="project" value="GO_Central"/>
</dbReference>
<dbReference type="GO" id="GO:0042445">
    <property type="term" value="P:hormone metabolic process"/>
    <property type="evidence" value="ECO:0000315"/>
    <property type="project" value="UniProtKB"/>
</dbReference>
<dbReference type="GO" id="GO:0042759">
    <property type="term" value="P:long-chain fatty acid biosynthetic process"/>
    <property type="evidence" value="ECO:0000314"/>
    <property type="project" value="WormBase"/>
</dbReference>
<dbReference type="GO" id="GO:0018996">
    <property type="term" value="P:molting cycle, collagen and cuticulin-based cuticle"/>
    <property type="evidence" value="ECO:0000315"/>
    <property type="project" value="WormBase"/>
</dbReference>
<dbReference type="GO" id="GO:0006694">
    <property type="term" value="P:steroid biosynthetic process"/>
    <property type="evidence" value="ECO:0000314"/>
    <property type="project" value="WormBase"/>
</dbReference>
<dbReference type="CDD" id="cd05356">
    <property type="entry name" value="17beta-HSD1_like_SDR_c"/>
    <property type="match status" value="1"/>
</dbReference>
<dbReference type="FunFam" id="3.40.50.720:FF:000467">
    <property type="entry name" value="Steroid dehydrogenase 4"/>
    <property type="match status" value="1"/>
</dbReference>
<dbReference type="Gene3D" id="3.40.50.720">
    <property type="entry name" value="NAD(P)-binding Rossmann-like Domain"/>
    <property type="match status" value="1"/>
</dbReference>
<dbReference type="InterPro" id="IPR036291">
    <property type="entry name" value="NAD(P)-bd_dom_sf"/>
</dbReference>
<dbReference type="InterPro" id="IPR020904">
    <property type="entry name" value="Sc_DH/Rdtase_CS"/>
</dbReference>
<dbReference type="InterPro" id="IPR002347">
    <property type="entry name" value="SDR_fam"/>
</dbReference>
<dbReference type="PANTHER" id="PTHR43086:SF2">
    <property type="entry name" value="HYDROXYSTEROID DEHYDROGENASE-LIKE PROTEIN 1"/>
    <property type="match status" value="1"/>
</dbReference>
<dbReference type="PANTHER" id="PTHR43086">
    <property type="entry name" value="VERY-LONG-CHAIN 3-OXOOACYL-COA REDUCTASE"/>
    <property type="match status" value="1"/>
</dbReference>
<dbReference type="Pfam" id="PF00106">
    <property type="entry name" value="adh_short"/>
    <property type="match status" value="1"/>
</dbReference>
<dbReference type="PIRSF" id="PIRSF000126">
    <property type="entry name" value="11-beta-HSD1"/>
    <property type="match status" value="1"/>
</dbReference>
<dbReference type="PRINTS" id="PR00081">
    <property type="entry name" value="GDHRDH"/>
</dbReference>
<dbReference type="PRINTS" id="PR00080">
    <property type="entry name" value="SDRFAMILY"/>
</dbReference>
<dbReference type="SUPFAM" id="SSF51735">
    <property type="entry name" value="NAD(P)-binding Rossmann-fold domains"/>
    <property type="match status" value="1"/>
</dbReference>
<dbReference type="PROSITE" id="PS00061">
    <property type="entry name" value="ADH_SHORT"/>
    <property type="match status" value="1"/>
</dbReference>
<accession>Q09517</accession>
<accession>C1P622</accession>
<accession>S6FCZ1</accession>
<gene>
    <name type="primary">let-767</name>
    <name type="synonym">dhs-10</name>
    <name type="ORF">C56G2.6</name>
</gene>
<protein>
    <recommendedName>
        <fullName>Very-long-chain 3-oxooacyl-coA reductase let-767</fullName>
        <shortName evidence="7 8 9">LET-767</shortName>
        <ecNumber evidence="12 13">1.1.1.330</ecNumber>
    </recommendedName>
    <alternativeName>
        <fullName>Lethal protein 767</fullName>
    </alternativeName>
    <alternativeName>
        <fullName>Short-chain dehydrogenase 10</fullName>
    </alternativeName>
    <alternativeName>
        <fullName>Steroid dehydrogenase let-767</fullName>
        <ecNumber evidence="4">1.1.1.-</ecNumber>
    </alternativeName>
    <alternativeName>
        <fullName evidence="9">Steroid-dehydrogenase/3-ketoacyl-CoA-reductase</fullName>
    </alternativeName>
</protein>
<organism>
    <name type="scientific">Caenorhabditis elegans</name>
    <dbReference type="NCBI Taxonomy" id="6239"/>
    <lineage>
        <taxon>Eukaryota</taxon>
        <taxon>Metazoa</taxon>
        <taxon>Ecdysozoa</taxon>
        <taxon>Nematoda</taxon>
        <taxon>Chromadorea</taxon>
        <taxon>Rhabditida</taxon>
        <taxon>Rhabditina</taxon>
        <taxon>Rhabditomorpha</taxon>
        <taxon>Rhabditoidea</taxon>
        <taxon>Rhabditidae</taxon>
        <taxon>Peloderinae</taxon>
        <taxon>Caenorhabditis</taxon>
    </lineage>
</organism>
<evidence type="ECO:0000250" key="1"/>
<evidence type="ECO:0000255" key="2">
    <source>
        <dbReference type="PROSITE-ProRule" id="PRU10001"/>
    </source>
</evidence>
<evidence type="ECO:0000269" key="3">
    <source>
    </source>
</evidence>
<evidence type="ECO:0000269" key="4">
    <source>
    </source>
</evidence>
<evidence type="ECO:0000269" key="5">
    <source>
    </source>
</evidence>
<evidence type="ECO:0000269" key="6">
    <source>
    </source>
</evidence>
<evidence type="ECO:0000303" key="7">
    <source>
    </source>
</evidence>
<evidence type="ECO:0000303" key="8">
    <source>
    </source>
</evidence>
<evidence type="ECO:0000303" key="9">
    <source>
    </source>
</evidence>
<evidence type="ECO:0000305" key="10"/>
<evidence type="ECO:0000305" key="11">
    <source>
    </source>
</evidence>
<evidence type="ECO:0000305" key="12">
    <source>
    </source>
</evidence>
<evidence type="ECO:0000305" key="13">
    <source>
    </source>
</evidence>
<name>LE767_CAEEL</name>
<keyword id="KW-0024">Alternative initiation</keyword>
<keyword id="KW-0275">Fatty acid biosynthesis</keyword>
<keyword id="KW-0276">Fatty acid metabolism</keyword>
<keyword id="KW-0444">Lipid biosynthesis</keyword>
<keyword id="KW-0443">Lipid metabolism</keyword>
<keyword id="KW-0521">NADP</keyword>
<keyword id="KW-0560">Oxidoreductase</keyword>
<keyword id="KW-1185">Reference proteome</keyword>
<keyword id="KW-0752">Steroid biosynthesis</keyword>
<keyword id="KW-0753">Steroid metabolism</keyword>
<proteinExistence type="evidence at protein level"/>
<sequence>MACQCFLVGAGYVALAAVAYRLLTIFSNILGPYVLLSPIDLKKRAGASWAVVTGATDGIGKAYAFELARRGFNVLLVSRTQSKLDETKKEILEKYSSIEVRTAAFDFTNAAPSAYKDLLATLNQVEIGVLINNVGMSYEYPDVLHKVDGGIERLANITTINTLPPTLLSAGILPQMVARKAGVIVNVGSSAGANQMALWAVYSATKKYVSWLTAILRKEYEHQGITVQTIAPMMVATKMSKVKRTSFFTPDGAVFAKSALNTVGNTSDTTGYITHQLQLELMDLIPTFIRDKILTNMSVGTRAAALRKKEREAKSQ</sequence>
<comment type="function">
    <text evidence="3 4 5 6">Required for branched-chain fatty acid synthesis (such as (omega-1)-methyl-fatty acids) (PubMed:18390550). Catalyzes the reduction of the 3-keto-fatty acyl-CoA intermediate that is formed in each cycle of fatty acid elongation (PubMed:18390550). Very long-chain fatty acids (VLCFAs) serve as precursors for ceramide and sphingolipids (PubMed:12905072, PubMed:18390550, PubMed:21926990). Involved in hormone production as it metabolizes 4-androstendione (androst-4-ene-3,17-dione) into testosterone and estrone into estradiol (17beta-estradiol) in vitro, but the physiological steroid substrate is unknown (PubMed:17951538).</text>
</comment>
<comment type="catalytic activity">
    <reaction evidence="12 13">
        <text>a very-long-chain (3R)-3-hydroxyacyl-CoA + NADP(+) = a very-long-chain 3-oxoacyl-CoA + NADPH + H(+)</text>
        <dbReference type="Rhea" id="RHEA:48680"/>
        <dbReference type="ChEBI" id="CHEBI:15378"/>
        <dbReference type="ChEBI" id="CHEBI:57783"/>
        <dbReference type="ChEBI" id="CHEBI:58349"/>
        <dbReference type="ChEBI" id="CHEBI:85440"/>
        <dbReference type="ChEBI" id="CHEBI:90725"/>
        <dbReference type="EC" id="1.1.1.330"/>
    </reaction>
    <physiologicalReaction direction="right-to-left" evidence="12 13">
        <dbReference type="Rhea" id="RHEA:48682"/>
    </physiologicalReaction>
</comment>
<comment type="catalytic activity">
    <reaction evidence="5">
        <text>(omega-1)-methyl-(3R)-hydroxy-fatty acyl-CoA + NADP(+) = (omega-1)-methyl-3-oxo-fatty acyl-CoA + NADPH + H(+)</text>
        <dbReference type="Rhea" id="RHEA:69216"/>
        <dbReference type="ChEBI" id="CHEBI:15378"/>
        <dbReference type="ChEBI" id="CHEBI:57783"/>
        <dbReference type="ChEBI" id="CHEBI:58349"/>
        <dbReference type="ChEBI" id="CHEBI:183086"/>
        <dbReference type="ChEBI" id="CHEBI:183087"/>
    </reaction>
    <physiologicalReaction direction="right-to-left" evidence="12">
        <dbReference type="Rhea" id="RHEA:69218"/>
    </physiologicalReaction>
</comment>
<comment type="catalytic activity">
    <reaction evidence="4">
        <text>a 17beta-hydroxy steroid + NADP(+) = a 17-oxo steroid + NADPH + H(+)</text>
        <dbReference type="Rhea" id="RHEA:69284"/>
        <dbReference type="ChEBI" id="CHEBI:15378"/>
        <dbReference type="ChEBI" id="CHEBI:19168"/>
        <dbReference type="ChEBI" id="CHEBI:35343"/>
        <dbReference type="ChEBI" id="CHEBI:57783"/>
        <dbReference type="ChEBI" id="CHEBI:58349"/>
    </reaction>
    <physiologicalReaction direction="right-to-left" evidence="11">
        <dbReference type="Rhea" id="RHEA:69286"/>
    </physiologicalReaction>
</comment>
<comment type="pathway">
    <text evidence="5 6">Lipid metabolism; fatty acid biosynthesis.</text>
</comment>
<comment type="alternative products">
    <event type="alternative initiation"/>
    <isoform>
        <id>Q09517-1</id>
        <name>1</name>
        <sequence type="displayed"/>
    </isoform>
    <isoform>
        <id>Q09517-2</id>
        <name>2</name>
        <sequence type="described" ref="VSP_061063"/>
    </isoform>
    <isoform>
        <id>Q09517-3</id>
        <name>3</name>
        <sequence type="described" ref="VSP_061063 VSP_061064"/>
    </isoform>
</comment>
<comment type="tissue specificity">
    <text evidence="3">Expressed in the gut of larva and adult.</text>
</comment>
<comment type="developmental stage">
    <text evidence="3">Expressed from first larval stage to adult.</text>
</comment>
<comment type="disruption phenotype">
    <text evidence="3 6">Worms exhibit slow and retarded growth, reproductive and molting defects, defects in embryogenesis, and hypersensitivity to cholesterol limitation (PubMed:12905072). Increased polarity and tubulogenesis defects in an allelic series of let-767 (PubMed:21926990).</text>
</comment>
<comment type="similarity">
    <text evidence="10">Belongs to the short-chain dehydrogenases/reductases (SDR) family. 17-beta-HSD 3 subfamily.</text>
</comment>
<reference key="1">
    <citation type="journal article" date="1998" name="Science">
        <title>Genome sequence of the nematode C. elegans: a platform for investigating biology.</title>
        <authorList>
            <consortium name="The C. elegans sequencing consortium"/>
        </authorList>
    </citation>
    <scope>NUCLEOTIDE SEQUENCE [LARGE SCALE GENOMIC DNA]</scope>
    <source>
        <strain>Bristol N2</strain>
    </source>
</reference>
<reference key="2">
    <citation type="online journal article" date="1998" name="Worm Breeder's Gazette">
        <title>Let-767 is a gut-specific dehydrogenase.</title>
        <authorList>
            <person name="Kuervers L.M."/>
            <person name="O'Neil N.J."/>
            <person name="Baillie D.L."/>
        </authorList>
        <locator>15(3):34</locator>
    </citation>
    <scope>IDENTIFICATION</scope>
</reference>
<reference key="3">
    <citation type="journal article" date="2003" name="Mol. Genet. Genomics">
        <title>The sterol modifying enzyme LET-767 is essential for growth, reproduction and development in Caenorhabditis elegans.</title>
        <authorList>
            <person name="Kuervers L.M."/>
            <person name="Jones C.L."/>
            <person name="O'Neil N.J."/>
            <person name="Baillie D.L."/>
        </authorList>
    </citation>
    <scope>FUNCTION</scope>
    <scope>TISSUE SPECIFICITY</scope>
    <scope>DEVELOPMENTAL STAGE</scope>
    <scope>MUTAGENESIS OF GLY-135</scope>
    <scope>DISRUPTION PHENOTYPE</scope>
</reference>
<reference key="4">
    <citation type="journal article" date="2007" name="J. Endocrinol.">
        <title>Caenorhabditis elegans LET-767 is able to metabolize androgens and estrogens and likely shares common ancestor with human types 3 and 12 17beta-hydroxysteroid dehydrogenases.</title>
        <authorList>
            <person name="Desnoyers S."/>
            <person name="Blanchard P.G."/>
            <person name="St-Laurent J.F."/>
            <person name="Gagnon S.N."/>
            <person name="Baillie D.L."/>
            <person name="Luu-The V."/>
        </authorList>
    </citation>
    <scope>FUNCTION</scope>
    <scope>CATALYTIC ACTIVITY</scope>
</reference>
<reference key="5">
    <citation type="journal article" date="2008" name="J. Biol. Chem.">
        <title>LET-767 is required for the production of branched chain and long chain fatty acids in Caenorhabditis elegans.</title>
        <authorList>
            <person name="Entchev E.V."/>
            <person name="Schwudke D."/>
            <person name="Zagoriy V."/>
            <person name="Matyash V."/>
            <person name="Bogdanova A."/>
            <person name="Habermann B."/>
            <person name="Zhu L."/>
            <person name="Shevchenko A."/>
            <person name="Kurzchalia T.V."/>
        </authorList>
    </citation>
    <scope>FUNCTION AS A 3-OXOACYL-COA REDUCTASE</scope>
    <scope>CATALYTIC ACTIVITY</scope>
    <scope>PATHWAY</scope>
</reference>
<reference key="6">
    <citation type="journal article" date="2011" name="Nat. Cell Biol.">
        <title>Apicobasal domain identities of expanding tubular membranes depend on glycosphingolipid biosynthesis.</title>
        <authorList>
            <person name="Zhang H."/>
            <person name="Abraham N."/>
            <person name="Khan L.A."/>
            <person name="Hall D.H."/>
            <person name="Fleming J.T."/>
            <person name="Gobel V."/>
        </authorList>
    </citation>
    <scope>FUNCTION</scope>
    <scope>DISRUPTION PHENOTYPE</scope>
    <scope>PATHWAY</scope>
</reference>